<dbReference type="EMBL" id="D32216">
    <property type="status" value="NOT_ANNOTATED_CDS"/>
    <property type="molecule type" value="Genomic_DNA"/>
</dbReference>
<dbReference type="EMBL" id="D84432">
    <property type="protein sequence ID" value="BAA12409.1"/>
    <property type="molecule type" value="Genomic_DNA"/>
</dbReference>
<dbReference type="EMBL" id="AL009126">
    <property type="protein sequence ID" value="CAB14546.1"/>
    <property type="molecule type" value="Genomic_DNA"/>
</dbReference>
<dbReference type="PIR" id="E69950">
    <property type="entry name" value="E69950"/>
</dbReference>
<dbReference type="RefSeq" id="NP_390482.1">
    <property type="nucleotide sequence ID" value="NC_000964.3"/>
</dbReference>
<dbReference type="RefSeq" id="WP_004398662.1">
    <property type="nucleotide sequence ID" value="NZ_OZ025638.1"/>
</dbReference>
<dbReference type="SMR" id="P54373"/>
<dbReference type="FunCoup" id="P54373">
    <property type="interactions" value="68"/>
</dbReference>
<dbReference type="STRING" id="224308.BSU26050"/>
<dbReference type="PaxDb" id="224308-BSU26050"/>
<dbReference type="EnsemblBacteria" id="CAB14546">
    <property type="protein sequence ID" value="CAB14546"/>
    <property type="gene ID" value="BSU_26050"/>
</dbReference>
<dbReference type="GeneID" id="8303122"/>
<dbReference type="KEGG" id="bsu:BSU26050"/>
<dbReference type="PATRIC" id="fig|224308.179.peg.2831"/>
<dbReference type="InParanoid" id="P54373"/>
<dbReference type="OrthoDB" id="9865702at2"/>
<dbReference type="BioCyc" id="BSUB:BSU26050-MONOMER"/>
<dbReference type="Proteomes" id="UP000001570">
    <property type="component" value="Chromosome"/>
</dbReference>
<dbReference type="GO" id="GO:0005886">
    <property type="term" value="C:plasma membrane"/>
    <property type="evidence" value="ECO:0007669"/>
    <property type="project" value="UniProtKB-SubCell"/>
</dbReference>
<comment type="function">
    <text evidence="2 5">Toxic component of a type I toxin-antitoxin (TA) system (PubMed:16166525). Overexpression of txpA causes cell lysis; the TxpA protein has been suggested to act on the cell membrane or might possibly block cell wall synthesis (PubMed:16166525). Overexpression in E.coli is not toxic (PubMed:16166525).</text>
</comment>
<comment type="subcellular location">
    <subcellularLocation>
        <location evidence="4">Cell membrane</location>
        <topology evidence="4">Single-pass membrane protein</topology>
    </subcellularLocation>
</comment>
<comment type="induction">
    <text evidence="2">The antisense RNA ratA acts as an antitoxin by annealing to the mRNA of txpA and causing its degradation, protecting the cell from TxpA by blocking the production of the toxin. A type I toxin-antitoxin (TA) system, where expression of the proteinaceous toxin is controlled by an antisense sRNA.</text>
</comment>
<comment type="miscellaneous">
    <text evidence="6">Encoded in a 48-kb, phage-like element known as skin.</text>
</comment>
<keyword id="KW-1003">Cell membrane</keyword>
<keyword id="KW-0472">Membrane</keyword>
<keyword id="KW-1185">Reference proteome</keyword>
<keyword id="KW-1277">Toxin-antitoxin system</keyword>
<keyword id="KW-0812">Transmembrane</keyword>
<keyword id="KW-1133">Transmembrane helix</keyword>
<feature type="chain" id="PRO_0000049781" description="Toxin TxpA">
    <location>
        <begin position="1"/>
        <end position="59"/>
    </location>
</feature>
<feature type="transmembrane region" description="Helical" evidence="1">
    <location>
        <begin position="7"/>
        <end position="27"/>
    </location>
</feature>
<gene>
    <name evidence="3" type="primary">txpA</name>
    <name type="synonym">yqcR</name>
    <name type="synonym">yqdB</name>
    <name type="ordered locus">BSU26050</name>
</gene>
<evidence type="ECO:0000255" key="1"/>
<evidence type="ECO:0000269" key="2">
    <source>
    </source>
</evidence>
<evidence type="ECO:0000303" key="3">
    <source>
    </source>
</evidence>
<evidence type="ECO:0000305" key="4"/>
<evidence type="ECO:0000305" key="5">
    <source>
    </source>
</evidence>
<evidence type="ECO:0000305" key="6">
    <source>
    </source>
</evidence>
<sequence length="59" mass="6739">MSTYESLMVMIGFANLIGGIMTWVISLLTLLFMLRKKDTHPIYITVKEKCLHEDPPIKG</sequence>
<name>TXPA_BACSU</name>
<reference key="1">
    <citation type="journal article" date="1995" name="Microbiology">
        <title>Complete nucleotide sequence of a skin element excised by DNA rearrangement during sporulation in Bacillus subtilis.</title>
        <authorList>
            <person name="Takemaru K."/>
            <person name="Mizuno M."/>
            <person name="Sato T."/>
            <person name="Takeuchi M."/>
            <person name="Kobayashi Y."/>
        </authorList>
    </citation>
    <scope>NUCLEOTIDE SEQUENCE [GENOMIC DNA]</scope>
    <source>
        <strain>168 / JH642</strain>
    </source>
</reference>
<reference key="2">
    <citation type="journal article" date="1996" name="Microbiology">
        <title>Systematic sequencing of the 283 kb 210 degrees-232 degrees region of the Bacillus subtilis genome containing the skin element and many sporulation genes.</title>
        <authorList>
            <person name="Mizuno M."/>
            <person name="Masuda S."/>
            <person name="Takemaru K."/>
            <person name="Hosono S."/>
            <person name="Sato T."/>
            <person name="Takeuchi M."/>
            <person name="Kobayashi Y."/>
        </authorList>
    </citation>
    <scope>NUCLEOTIDE SEQUENCE [GENOMIC DNA]</scope>
    <source>
        <strain>168 / JH642</strain>
    </source>
</reference>
<reference key="3">
    <citation type="journal article" date="1997" name="Nature">
        <title>The complete genome sequence of the Gram-positive bacterium Bacillus subtilis.</title>
        <authorList>
            <person name="Kunst F."/>
            <person name="Ogasawara N."/>
            <person name="Moszer I."/>
            <person name="Albertini A.M."/>
            <person name="Alloni G."/>
            <person name="Azevedo V."/>
            <person name="Bertero M.G."/>
            <person name="Bessieres P."/>
            <person name="Bolotin A."/>
            <person name="Borchert S."/>
            <person name="Borriss R."/>
            <person name="Boursier L."/>
            <person name="Brans A."/>
            <person name="Braun M."/>
            <person name="Brignell S.C."/>
            <person name="Bron S."/>
            <person name="Brouillet S."/>
            <person name="Bruschi C.V."/>
            <person name="Caldwell B."/>
            <person name="Capuano V."/>
            <person name="Carter N.M."/>
            <person name="Choi S.-K."/>
            <person name="Codani J.-J."/>
            <person name="Connerton I.F."/>
            <person name="Cummings N.J."/>
            <person name="Daniel R.A."/>
            <person name="Denizot F."/>
            <person name="Devine K.M."/>
            <person name="Duesterhoeft A."/>
            <person name="Ehrlich S.D."/>
            <person name="Emmerson P.T."/>
            <person name="Entian K.-D."/>
            <person name="Errington J."/>
            <person name="Fabret C."/>
            <person name="Ferrari E."/>
            <person name="Foulger D."/>
            <person name="Fritz C."/>
            <person name="Fujita M."/>
            <person name="Fujita Y."/>
            <person name="Fuma S."/>
            <person name="Galizzi A."/>
            <person name="Galleron N."/>
            <person name="Ghim S.-Y."/>
            <person name="Glaser P."/>
            <person name="Goffeau A."/>
            <person name="Golightly E.J."/>
            <person name="Grandi G."/>
            <person name="Guiseppi G."/>
            <person name="Guy B.J."/>
            <person name="Haga K."/>
            <person name="Haiech J."/>
            <person name="Harwood C.R."/>
            <person name="Henaut A."/>
            <person name="Hilbert H."/>
            <person name="Holsappel S."/>
            <person name="Hosono S."/>
            <person name="Hullo M.-F."/>
            <person name="Itaya M."/>
            <person name="Jones L.-M."/>
            <person name="Joris B."/>
            <person name="Karamata D."/>
            <person name="Kasahara Y."/>
            <person name="Klaerr-Blanchard M."/>
            <person name="Klein C."/>
            <person name="Kobayashi Y."/>
            <person name="Koetter P."/>
            <person name="Koningstein G."/>
            <person name="Krogh S."/>
            <person name="Kumano M."/>
            <person name="Kurita K."/>
            <person name="Lapidus A."/>
            <person name="Lardinois S."/>
            <person name="Lauber J."/>
            <person name="Lazarevic V."/>
            <person name="Lee S.-M."/>
            <person name="Levine A."/>
            <person name="Liu H."/>
            <person name="Masuda S."/>
            <person name="Mauel C."/>
            <person name="Medigue C."/>
            <person name="Medina N."/>
            <person name="Mellado R.P."/>
            <person name="Mizuno M."/>
            <person name="Moestl D."/>
            <person name="Nakai S."/>
            <person name="Noback M."/>
            <person name="Noone D."/>
            <person name="O'Reilly M."/>
            <person name="Ogawa K."/>
            <person name="Ogiwara A."/>
            <person name="Oudega B."/>
            <person name="Park S.-H."/>
            <person name="Parro V."/>
            <person name="Pohl T.M."/>
            <person name="Portetelle D."/>
            <person name="Porwollik S."/>
            <person name="Prescott A.M."/>
            <person name="Presecan E."/>
            <person name="Pujic P."/>
            <person name="Purnelle B."/>
            <person name="Rapoport G."/>
            <person name="Rey M."/>
            <person name="Reynolds S."/>
            <person name="Rieger M."/>
            <person name="Rivolta C."/>
            <person name="Rocha E."/>
            <person name="Roche B."/>
            <person name="Rose M."/>
            <person name="Sadaie Y."/>
            <person name="Sato T."/>
            <person name="Scanlan E."/>
            <person name="Schleich S."/>
            <person name="Schroeter R."/>
            <person name="Scoffone F."/>
            <person name="Sekiguchi J."/>
            <person name="Sekowska A."/>
            <person name="Seror S.J."/>
            <person name="Serror P."/>
            <person name="Shin B.-S."/>
            <person name="Soldo B."/>
            <person name="Sorokin A."/>
            <person name="Tacconi E."/>
            <person name="Takagi T."/>
            <person name="Takahashi H."/>
            <person name="Takemaru K."/>
            <person name="Takeuchi M."/>
            <person name="Tamakoshi A."/>
            <person name="Tanaka T."/>
            <person name="Terpstra P."/>
            <person name="Tognoni A."/>
            <person name="Tosato V."/>
            <person name="Uchiyama S."/>
            <person name="Vandenbol M."/>
            <person name="Vannier F."/>
            <person name="Vassarotti A."/>
            <person name="Viari A."/>
            <person name="Wambutt R."/>
            <person name="Wedler E."/>
            <person name="Wedler H."/>
            <person name="Weitzenegger T."/>
            <person name="Winters P."/>
            <person name="Wipat A."/>
            <person name="Yamamoto H."/>
            <person name="Yamane K."/>
            <person name="Yasumoto K."/>
            <person name="Yata K."/>
            <person name="Yoshida K."/>
            <person name="Yoshikawa H.-F."/>
            <person name="Zumstein E."/>
            <person name="Yoshikawa H."/>
            <person name="Danchin A."/>
        </authorList>
    </citation>
    <scope>NUCLEOTIDE SEQUENCE [LARGE SCALE GENOMIC DNA]</scope>
    <source>
        <strain>168</strain>
    </source>
</reference>
<reference key="4">
    <citation type="journal article" date="2005" name="J. Bacteriol.">
        <title>Small untranslated RNA antitoxin in Bacillus subtilis.</title>
        <authorList>
            <person name="Silvaggi J.M."/>
            <person name="Perkins J.B."/>
            <person name="Losick R."/>
        </authorList>
    </citation>
    <scope>FUNCTION</scope>
    <scope>INDUCTION</scope>
    <scope>OVEREXPRESSION</scope>
    <source>
        <strain>168 / PY79</strain>
    </source>
</reference>
<proteinExistence type="evidence at transcript level"/>
<accession>P54373</accession>
<organism>
    <name type="scientific">Bacillus subtilis (strain 168)</name>
    <dbReference type="NCBI Taxonomy" id="224308"/>
    <lineage>
        <taxon>Bacteria</taxon>
        <taxon>Bacillati</taxon>
        <taxon>Bacillota</taxon>
        <taxon>Bacilli</taxon>
        <taxon>Bacillales</taxon>
        <taxon>Bacillaceae</taxon>
        <taxon>Bacillus</taxon>
    </lineage>
</organism>
<protein>
    <recommendedName>
        <fullName evidence="3">Toxin TxpA</fullName>
    </recommendedName>
</protein>